<proteinExistence type="evidence at protein level"/>
<feature type="chain" id="PRO_0000296361" description="Formin-1">
    <location>
        <begin position="1"/>
        <end position="1419"/>
    </location>
</feature>
<feature type="domain" description="FH1">
    <location>
        <begin position="870"/>
        <end position="957"/>
    </location>
</feature>
<feature type="domain" description="FH2" evidence="4">
    <location>
        <begin position="972"/>
        <end position="1388"/>
    </location>
</feature>
<feature type="region of interest" description="Microtubule-binding" evidence="1">
    <location>
        <begin position="1"/>
        <end position="622"/>
    </location>
</feature>
<feature type="region of interest" description="Disordered" evidence="5">
    <location>
        <begin position="138"/>
        <end position="194"/>
    </location>
</feature>
<feature type="region of interest" description="Disordered" evidence="5">
    <location>
        <begin position="262"/>
        <end position="331"/>
    </location>
</feature>
<feature type="region of interest" description="Disordered" evidence="5">
    <location>
        <begin position="343"/>
        <end position="641"/>
    </location>
</feature>
<feature type="region of interest" description="Mediates interaction with alpha-catenin" evidence="1">
    <location>
        <begin position="456"/>
        <end position="842"/>
    </location>
</feature>
<feature type="region of interest" description="Disordered" evidence="5">
    <location>
        <begin position="685"/>
        <end position="711"/>
    </location>
</feature>
<feature type="region of interest" description="Disordered" evidence="5">
    <location>
        <begin position="859"/>
        <end position="978"/>
    </location>
</feature>
<feature type="region of interest" description="Disordered" evidence="5">
    <location>
        <begin position="1390"/>
        <end position="1419"/>
    </location>
</feature>
<feature type="coiled-coil region" evidence="3">
    <location>
        <begin position="720"/>
        <end position="774"/>
    </location>
</feature>
<feature type="compositionally biased region" description="Basic residues" evidence="5">
    <location>
        <begin position="151"/>
        <end position="163"/>
    </location>
</feature>
<feature type="compositionally biased region" description="Basic and acidic residues" evidence="5">
    <location>
        <begin position="298"/>
        <end position="317"/>
    </location>
</feature>
<feature type="compositionally biased region" description="Polar residues" evidence="5">
    <location>
        <begin position="394"/>
        <end position="411"/>
    </location>
</feature>
<feature type="compositionally biased region" description="Basic and acidic residues" evidence="5">
    <location>
        <begin position="425"/>
        <end position="438"/>
    </location>
</feature>
<feature type="compositionally biased region" description="Polar residues" evidence="5">
    <location>
        <begin position="504"/>
        <end position="517"/>
    </location>
</feature>
<feature type="compositionally biased region" description="Pro residues" evidence="5">
    <location>
        <begin position="520"/>
        <end position="529"/>
    </location>
</feature>
<feature type="compositionally biased region" description="Polar residues" evidence="5">
    <location>
        <begin position="614"/>
        <end position="623"/>
    </location>
</feature>
<feature type="compositionally biased region" description="Basic and acidic residues" evidence="5">
    <location>
        <begin position="685"/>
        <end position="694"/>
    </location>
</feature>
<feature type="compositionally biased region" description="Pro residues" evidence="5">
    <location>
        <begin position="868"/>
        <end position="882"/>
    </location>
</feature>
<feature type="compositionally biased region" description="Pro residues" evidence="5">
    <location>
        <begin position="890"/>
        <end position="958"/>
    </location>
</feature>
<feature type="splice variant" id="VSP_027208" description="In isoform 3 and isoform 5." evidence="9">
    <location>
        <begin position="1"/>
        <end position="680"/>
    </location>
</feature>
<feature type="splice variant" id="VSP_027209" description="In isoform 2." evidence="10">
    <original>GISSEGFPWDGFNEQTPKDLPNRDGGAWVLGYRAGPACPF</original>
    <variation>AFHWDLQQHFQEPVIRTVSISCASNLIKEEAGKGKESRSG</variation>
    <location>
        <begin position="623"/>
        <end position="662"/>
    </location>
</feature>
<feature type="splice variant" id="VSP_027210" description="In isoform 2." evidence="10">
    <location>
        <begin position="663"/>
        <end position="1419"/>
    </location>
</feature>
<feature type="splice variant" id="VSP_027211" description="In isoform 3 and isoform 5." evidence="9">
    <original>H</original>
    <variation>MENVDNSLDGSDVSEPAKPEAGLEVAQSILSKFSMKSLFGFTSKLESVNPEEEDAVLKAFHSLDVNPTSQQDDSSNGLDPQEAGSRVSPDLGNDEKIASVETESEGSQRKEAGTSLLAQELLPLSTLKGTKDDVICVRGTLVHTTSDSDSDDGGQEPEEGSSTNGPKSPSGVLSEPSQESKENPGGFRENTVTGEMNGAELCAEDPQRIPPEMSSKLEAGNGGLQTERRPSQDQVGEEGSQDLPAVTNQNSSVGITESASSKKEVSGEKSFQLPAFFSGLRVLKKGATAEGGETITEIKPKDGDLALLKLTQPVQKSLVQAGLQTVKSEKKATDPKATPTLLEQLSLLLNIDMPKTEPKGADPESPRREEMGCNADQESQSGPGVPQTQGGEVKPKSPETALEAFKALFIRPPRKGTTADTSELEALKRKMRHEKESLRAVFERSNSKPADGPSDSKS</variation>
    <location>
        <position position="681"/>
    </location>
</feature>
<feature type="splice variant" id="VSP_027212" description="In isoform 3." evidence="9">
    <original>EYQAAI</original>
    <variation>GNVKGS</variation>
    <location>
        <begin position="721"/>
        <end position="726"/>
    </location>
</feature>
<feature type="splice variant" id="VSP_027213" description="In isoform 3." evidence="9">
    <location>
        <begin position="727"/>
        <end position="1419"/>
    </location>
</feature>
<feature type="sequence variant" id="VAR_034630" description="In dbSNP:rs2306277." evidence="6 7">
    <original>L</original>
    <variation>P</variation>
    <location>
        <position position="686"/>
    </location>
</feature>
<feature type="sequence conflict" description="In Ref. 1; CAH18313." evidence="11" ref="1">
    <original>S</original>
    <variation>A</variation>
    <location>
        <position position="57"/>
    </location>
</feature>
<feature type="sequence conflict" description="In Ref. 1; CAH18313." evidence="11" ref="1">
    <original>L</original>
    <variation>P</variation>
    <location>
        <position position="221"/>
    </location>
</feature>
<feature type="sequence conflict" description="In Ref. 3; AAI03693/AAI07594." evidence="11" ref="3">
    <original>G</original>
    <variation>V</variation>
    <location sequence="Q68DA7-3">
        <position position="171"/>
    </location>
</feature>
<feature type="sequence conflict" description="In Ref. 3; AAI07594." evidence="11" ref="3">
    <original>G</original>
    <variation>E</variation>
    <location sequence="Q68DA7-3">
        <position position="239"/>
    </location>
</feature>
<evidence type="ECO:0000250" key="1"/>
<evidence type="ECO:0000250" key="2">
    <source>
        <dbReference type="UniProtKB" id="Q05860"/>
    </source>
</evidence>
<evidence type="ECO:0000255" key="3"/>
<evidence type="ECO:0000255" key="4">
    <source>
        <dbReference type="PROSITE-ProRule" id="PRU00774"/>
    </source>
</evidence>
<evidence type="ECO:0000256" key="5">
    <source>
        <dbReference type="SAM" id="MobiDB-lite"/>
    </source>
</evidence>
<evidence type="ECO:0000269" key="6">
    <source>
    </source>
</evidence>
<evidence type="ECO:0000269" key="7">
    <source>
    </source>
</evidence>
<evidence type="ECO:0000269" key="8">
    <source>
    </source>
</evidence>
<evidence type="ECO:0000303" key="9">
    <source>
    </source>
</evidence>
<evidence type="ECO:0000303" key="10">
    <source>
    </source>
</evidence>
<evidence type="ECO:0000305" key="11"/>
<accession>Q68DA7</accession>
<accession>Q3B7I6</accession>
<accession>Q3ZAR4</accession>
<accession>Q6ZSY1</accession>
<gene>
    <name type="primary">FMN1</name>
    <name type="synonym">FMN</name>
    <name type="synonym">LD</name>
</gene>
<name>FMN1_HUMAN</name>
<comment type="function">
    <text evidence="1">Plays a role in the formation of adherens junction and the polymerization of linear actin cables.</text>
</comment>
<comment type="subunit">
    <text evidence="1">Interacts with alpha-catenin and may interact with tubulin.</text>
</comment>
<comment type="subcellular location">
    <subcellularLocation>
        <location evidence="1">Nucleus</location>
    </subcellularLocation>
    <subcellularLocation>
        <location evidence="1">Cytoplasm</location>
    </subcellularLocation>
    <subcellularLocation>
        <location evidence="1">Cell junction</location>
        <location evidence="1">Adherens junction</location>
    </subcellularLocation>
    <subcellularLocation>
        <location evidence="1">Cell membrane</location>
        <topology evidence="1">Peripheral membrane protein</topology>
        <orientation evidence="1">Cytoplasmic side</orientation>
    </subcellularLocation>
    <text evidence="1">Localization to the adherens junctions is alpha-catenin-dependent. Also localizes to F-actin bundles originating from adherens junctions and to microtubules (By similarity).</text>
</comment>
<comment type="alternative products">
    <event type="alternative splicing"/>
    <isoform>
        <id>Q68DA7-1</id>
        <name>1</name>
        <sequence type="displayed"/>
    </isoform>
    <isoform>
        <id>Q68DA7-2</id>
        <name>2</name>
        <sequence type="described" ref="VSP_027209 VSP_027210"/>
    </isoform>
    <isoform>
        <id>Q68DA7-3</id>
        <name>3</name>
        <sequence type="described" ref="VSP_027208 VSP_027211 VSP_027212 VSP_027213"/>
    </isoform>
    <isoform>
        <id>Q68DA7-5</id>
        <name>5</name>
        <sequence type="described" ref="VSP_027208 VSP_027211"/>
    </isoform>
</comment>
<comment type="developmental stage">
    <text evidence="8">Expressed in fetal kidney and fetal lung.</text>
</comment>
<comment type="PTM">
    <text evidence="2">Phosphorylated on serine and possibly threonine residues.</text>
</comment>
<comment type="similarity">
    <text evidence="11">Belongs to the formin homology family. Cappuccino subfamily.</text>
</comment>
<reference key="1">
    <citation type="journal article" date="2007" name="BMC Genomics">
        <title>The full-ORF clone resource of the German cDNA consortium.</title>
        <authorList>
            <person name="Bechtel S."/>
            <person name="Rosenfelder H."/>
            <person name="Duda A."/>
            <person name="Schmidt C.P."/>
            <person name="Ernst U."/>
            <person name="Wellenreuther R."/>
            <person name="Mehrle A."/>
            <person name="Schuster C."/>
            <person name="Bahr A."/>
            <person name="Bloecker H."/>
            <person name="Heubner D."/>
            <person name="Hoerlein A."/>
            <person name="Michel G."/>
            <person name="Wedler H."/>
            <person name="Koehrer K."/>
            <person name="Ottenwaelder B."/>
            <person name="Poustka A."/>
            <person name="Wiemann S."/>
            <person name="Schupp I."/>
        </authorList>
    </citation>
    <scope>NUCLEOTIDE SEQUENCE [LARGE SCALE MRNA] (ISOFORM 2)</scope>
    <source>
        <tissue>Retina</tissue>
    </source>
</reference>
<reference key="2">
    <citation type="journal article" date="2006" name="Nature">
        <title>Analysis of the DNA sequence and duplication history of human chromosome 15.</title>
        <authorList>
            <person name="Zody M.C."/>
            <person name="Garber M."/>
            <person name="Sharpe T."/>
            <person name="Young S.K."/>
            <person name="Rowen L."/>
            <person name="O'Neill K."/>
            <person name="Whittaker C.A."/>
            <person name="Kamal M."/>
            <person name="Chang J.L."/>
            <person name="Cuomo C.A."/>
            <person name="Dewar K."/>
            <person name="FitzGerald M.G."/>
            <person name="Kodira C.D."/>
            <person name="Madan A."/>
            <person name="Qin S."/>
            <person name="Yang X."/>
            <person name="Abbasi N."/>
            <person name="Abouelleil A."/>
            <person name="Arachchi H.M."/>
            <person name="Baradarani L."/>
            <person name="Birditt B."/>
            <person name="Bloom S."/>
            <person name="Bloom T."/>
            <person name="Borowsky M.L."/>
            <person name="Burke J."/>
            <person name="Butler J."/>
            <person name="Cook A."/>
            <person name="DeArellano K."/>
            <person name="DeCaprio D."/>
            <person name="Dorris L. III"/>
            <person name="Dors M."/>
            <person name="Eichler E.E."/>
            <person name="Engels R."/>
            <person name="Fahey J."/>
            <person name="Fleetwood P."/>
            <person name="Friedman C."/>
            <person name="Gearin G."/>
            <person name="Hall J.L."/>
            <person name="Hensley G."/>
            <person name="Johnson E."/>
            <person name="Jones C."/>
            <person name="Kamat A."/>
            <person name="Kaur A."/>
            <person name="Locke D.P."/>
            <person name="Madan A."/>
            <person name="Munson G."/>
            <person name="Jaffe D.B."/>
            <person name="Lui A."/>
            <person name="Macdonald P."/>
            <person name="Mauceli E."/>
            <person name="Naylor J.W."/>
            <person name="Nesbitt R."/>
            <person name="Nicol R."/>
            <person name="O'Leary S.B."/>
            <person name="Ratcliffe A."/>
            <person name="Rounsley S."/>
            <person name="She X."/>
            <person name="Sneddon K.M.B."/>
            <person name="Stewart S."/>
            <person name="Sougnez C."/>
            <person name="Stone S.M."/>
            <person name="Topham K."/>
            <person name="Vincent D."/>
            <person name="Wang S."/>
            <person name="Zimmer A.R."/>
            <person name="Birren B.W."/>
            <person name="Hood L."/>
            <person name="Lander E.S."/>
            <person name="Nusbaum C."/>
        </authorList>
    </citation>
    <scope>NUCLEOTIDE SEQUENCE [LARGE SCALE GENOMIC DNA]</scope>
</reference>
<reference key="3">
    <citation type="journal article" date="2004" name="Genome Res.">
        <title>The status, quality, and expansion of the NIH full-length cDNA project: the Mammalian Gene Collection (MGC).</title>
        <authorList>
            <consortium name="The MGC Project Team"/>
        </authorList>
    </citation>
    <scope>NUCLEOTIDE SEQUENCE [LARGE SCALE MRNA] (ISOFORM 3)</scope>
    <scope>VARIANT PRO-686</scope>
</reference>
<reference key="4">
    <citation type="journal article" date="2004" name="Nat. Genet.">
        <title>Complete sequencing and characterization of 21,243 full-length human cDNAs.</title>
        <authorList>
            <person name="Ota T."/>
            <person name="Suzuki Y."/>
            <person name="Nishikawa T."/>
            <person name="Otsuki T."/>
            <person name="Sugiyama T."/>
            <person name="Irie R."/>
            <person name="Wakamatsu A."/>
            <person name="Hayashi K."/>
            <person name="Sato H."/>
            <person name="Nagai K."/>
            <person name="Kimura K."/>
            <person name="Makita H."/>
            <person name="Sekine M."/>
            <person name="Obayashi M."/>
            <person name="Nishi T."/>
            <person name="Shibahara T."/>
            <person name="Tanaka T."/>
            <person name="Ishii S."/>
            <person name="Yamamoto J."/>
            <person name="Saito K."/>
            <person name="Kawai Y."/>
            <person name="Isono Y."/>
            <person name="Nakamura Y."/>
            <person name="Nagahari K."/>
            <person name="Murakami K."/>
            <person name="Yasuda T."/>
            <person name="Iwayanagi T."/>
            <person name="Wagatsuma M."/>
            <person name="Shiratori A."/>
            <person name="Sudo H."/>
            <person name="Hosoiri T."/>
            <person name="Kaku Y."/>
            <person name="Kodaira H."/>
            <person name="Kondo H."/>
            <person name="Sugawara M."/>
            <person name="Takahashi M."/>
            <person name="Kanda K."/>
            <person name="Yokoi T."/>
            <person name="Furuya T."/>
            <person name="Kikkawa E."/>
            <person name="Omura Y."/>
            <person name="Abe K."/>
            <person name="Kamihara K."/>
            <person name="Katsuta N."/>
            <person name="Sato K."/>
            <person name="Tanikawa M."/>
            <person name="Yamazaki M."/>
            <person name="Ninomiya K."/>
            <person name="Ishibashi T."/>
            <person name="Yamashita H."/>
            <person name="Murakawa K."/>
            <person name="Fujimori K."/>
            <person name="Tanai H."/>
            <person name="Kimata M."/>
            <person name="Watanabe M."/>
            <person name="Hiraoka S."/>
            <person name="Chiba Y."/>
            <person name="Ishida S."/>
            <person name="Ono Y."/>
            <person name="Takiguchi S."/>
            <person name="Watanabe S."/>
            <person name="Yosida M."/>
            <person name="Hotuta T."/>
            <person name="Kusano J."/>
            <person name="Kanehori K."/>
            <person name="Takahashi-Fujii A."/>
            <person name="Hara H."/>
            <person name="Tanase T.-O."/>
            <person name="Nomura Y."/>
            <person name="Togiya S."/>
            <person name="Komai F."/>
            <person name="Hara R."/>
            <person name="Takeuchi K."/>
            <person name="Arita M."/>
            <person name="Imose N."/>
            <person name="Musashino K."/>
            <person name="Yuuki H."/>
            <person name="Oshima A."/>
            <person name="Sasaki N."/>
            <person name="Aotsuka S."/>
            <person name="Yoshikawa Y."/>
            <person name="Matsunawa H."/>
            <person name="Ichihara T."/>
            <person name="Shiohata N."/>
            <person name="Sano S."/>
            <person name="Moriya S."/>
            <person name="Momiyama H."/>
            <person name="Satoh N."/>
            <person name="Takami S."/>
            <person name="Terashima Y."/>
            <person name="Suzuki O."/>
            <person name="Nakagawa S."/>
            <person name="Senoh A."/>
            <person name="Mizoguchi H."/>
            <person name="Goto Y."/>
            <person name="Shimizu F."/>
            <person name="Wakebe H."/>
            <person name="Hishigaki H."/>
            <person name="Watanabe T."/>
            <person name="Sugiyama A."/>
            <person name="Takemoto M."/>
            <person name="Kawakami B."/>
            <person name="Yamazaki M."/>
            <person name="Watanabe K."/>
            <person name="Kumagai A."/>
            <person name="Itakura S."/>
            <person name="Fukuzumi Y."/>
            <person name="Fujimori Y."/>
            <person name="Komiyama M."/>
            <person name="Tashiro H."/>
            <person name="Tanigami A."/>
            <person name="Fujiwara T."/>
            <person name="Ono T."/>
            <person name="Yamada K."/>
            <person name="Fujii Y."/>
            <person name="Ozaki K."/>
            <person name="Hirao M."/>
            <person name="Ohmori Y."/>
            <person name="Kawabata A."/>
            <person name="Hikiji T."/>
            <person name="Kobatake N."/>
            <person name="Inagaki H."/>
            <person name="Ikema Y."/>
            <person name="Okamoto S."/>
            <person name="Okitani R."/>
            <person name="Kawakami T."/>
            <person name="Noguchi S."/>
            <person name="Itoh T."/>
            <person name="Shigeta K."/>
            <person name="Senba T."/>
            <person name="Matsumura K."/>
            <person name="Nakajima Y."/>
            <person name="Mizuno T."/>
            <person name="Morinaga M."/>
            <person name="Sasaki M."/>
            <person name="Togashi T."/>
            <person name="Oyama M."/>
            <person name="Hata H."/>
            <person name="Watanabe M."/>
            <person name="Komatsu T."/>
            <person name="Mizushima-Sugano J."/>
            <person name="Satoh T."/>
            <person name="Shirai Y."/>
            <person name="Takahashi Y."/>
            <person name="Nakagawa K."/>
            <person name="Okumura K."/>
            <person name="Nagase T."/>
            <person name="Nomura N."/>
            <person name="Kikuchi H."/>
            <person name="Masuho Y."/>
            <person name="Yamashita R."/>
            <person name="Nakai K."/>
            <person name="Yada T."/>
            <person name="Nakamura Y."/>
            <person name="Ohara O."/>
            <person name="Isogai T."/>
            <person name="Sugano S."/>
        </authorList>
    </citation>
    <scope>PARTIAL NUCLEOTIDE SEQUENCE [LARGE SCALE MRNA] (ISOFORM 5)</scope>
    <scope>VARIANT PRO-686</scope>
    <source>
        <tissue>Brain</tissue>
    </source>
</reference>
<reference key="5">
    <citation type="journal article" date="1991" name="Am. J. Hum. Genet.">
        <title>A human gene homologous to the formin gene residing at the murine limb deformity locus: chromosomal location and RFLPs.</title>
        <authorList>
            <person name="Maas R.L."/>
            <person name="Jepeal L.I."/>
            <person name="Elfering S.L."/>
            <person name="Holcombe R.F."/>
            <person name="Morton C.C."/>
            <person name="Eddy R.L."/>
            <person name="Byers M.G."/>
            <person name="Shows T.B."/>
            <person name="Leder P."/>
        </authorList>
    </citation>
    <scope>IDENTIFICATION</scope>
    <scope>DEVELOPMENTAL STAGE</scope>
</reference>
<reference key="6">
    <citation type="journal article" date="2004" name="Int. J. Mol. Med.">
        <title>Identification and characterization of the human FMN1 gene in silico.</title>
        <authorList>
            <person name="Katoh M."/>
            <person name="Katoh M."/>
        </authorList>
    </citation>
    <scope>IDENTIFICATION</scope>
</reference>
<reference key="7">
    <citation type="journal article" date="2014" name="J. Proteomics">
        <title>An enzyme assisted RP-RPLC approach for in-depth analysis of human liver phosphoproteome.</title>
        <authorList>
            <person name="Bian Y."/>
            <person name="Song C."/>
            <person name="Cheng K."/>
            <person name="Dong M."/>
            <person name="Wang F."/>
            <person name="Huang J."/>
            <person name="Sun D."/>
            <person name="Wang L."/>
            <person name="Ye M."/>
            <person name="Zou H."/>
        </authorList>
    </citation>
    <scope>IDENTIFICATION BY MASS SPECTROMETRY [LARGE SCALE ANALYSIS]</scope>
    <source>
        <tissue>Liver</tissue>
    </source>
</reference>
<dbReference type="EMBL" id="CR749487">
    <property type="protein sequence ID" value="CAH18313.1"/>
    <property type="molecule type" value="mRNA"/>
</dbReference>
<dbReference type="EMBL" id="AC090098">
    <property type="status" value="NOT_ANNOTATED_CDS"/>
    <property type="molecule type" value="Genomic_DNA"/>
</dbReference>
<dbReference type="EMBL" id="AC090877">
    <property type="status" value="NOT_ANNOTATED_CDS"/>
    <property type="molecule type" value="Genomic_DNA"/>
</dbReference>
<dbReference type="EMBL" id="AC090982">
    <property type="status" value="NOT_ANNOTATED_CDS"/>
    <property type="molecule type" value="Genomic_DNA"/>
</dbReference>
<dbReference type="EMBL" id="AC018515">
    <property type="status" value="NOT_ANNOTATED_CDS"/>
    <property type="molecule type" value="Genomic_DNA"/>
</dbReference>
<dbReference type="EMBL" id="AC019278">
    <property type="status" value="NOT_ANNOTATED_CDS"/>
    <property type="molecule type" value="Genomic_DNA"/>
</dbReference>
<dbReference type="EMBL" id="BC103692">
    <property type="protein sequence ID" value="AAI03693.1"/>
    <property type="molecule type" value="mRNA"/>
</dbReference>
<dbReference type="EMBL" id="BC107593">
    <property type="protein sequence ID" value="AAI07594.1"/>
    <property type="molecule type" value="mRNA"/>
</dbReference>
<dbReference type="EMBL" id="AK127078">
    <property type="status" value="NOT_ANNOTATED_CDS"/>
    <property type="molecule type" value="mRNA"/>
</dbReference>
<dbReference type="CCDS" id="CCDS45209.1">
    <molecule id="Q68DA7-5"/>
</dbReference>
<dbReference type="CCDS" id="CCDS61581.1">
    <molecule id="Q68DA7-1"/>
</dbReference>
<dbReference type="CCDS" id="CCDS61582.1">
    <molecule id="Q68DA7-2"/>
</dbReference>
<dbReference type="RefSeq" id="NP_001096654.1">
    <molecule id="Q68DA7-5"/>
    <property type="nucleotide sequence ID" value="NM_001103184.4"/>
</dbReference>
<dbReference type="RefSeq" id="NP_001264242.1">
    <molecule id="Q68DA7-1"/>
    <property type="nucleotide sequence ID" value="NM_001277313.2"/>
</dbReference>
<dbReference type="RefSeq" id="NP_001264243.1">
    <molecule id="Q68DA7-2"/>
    <property type="nucleotide sequence ID" value="NM_001277314.2"/>
</dbReference>
<dbReference type="RefSeq" id="XP_011519806.1">
    <molecule id="Q68DA7-1"/>
    <property type="nucleotide sequence ID" value="XM_011521504.4"/>
</dbReference>
<dbReference type="RefSeq" id="XP_016877619.1">
    <property type="nucleotide sequence ID" value="XM_017022130.1"/>
</dbReference>
<dbReference type="SMR" id="Q68DA7"/>
<dbReference type="BioGRID" id="131167">
    <property type="interactions" value="13"/>
</dbReference>
<dbReference type="ELM" id="Q68DA7"/>
<dbReference type="FunCoup" id="Q68DA7">
    <property type="interactions" value="1184"/>
</dbReference>
<dbReference type="IntAct" id="Q68DA7">
    <property type="interactions" value="7"/>
</dbReference>
<dbReference type="MINT" id="Q68DA7"/>
<dbReference type="STRING" id="9606.ENSP00000479134"/>
<dbReference type="GlyGen" id="Q68DA7">
    <property type="glycosylation" value="3 sites, 1 N-linked glycan (1 site), 1 O-linked glycan (1 site)"/>
</dbReference>
<dbReference type="iPTMnet" id="Q68DA7"/>
<dbReference type="PhosphoSitePlus" id="Q68DA7"/>
<dbReference type="BioMuta" id="FMN1"/>
<dbReference type="DMDM" id="327478585"/>
<dbReference type="jPOST" id="Q68DA7"/>
<dbReference type="MassIVE" id="Q68DA7"/>
<dbReference type="PaxDb" id="9606-ENSP00000479134"/>
<dbReference type="PeptideAtlas" id="Q68DA7"/>
<dbReference type="ProteomicsDB" id="66065">
    <molecule id="Q68DA7-1"/>
</dbReference>
<dbReference type="ProteomicsDB" id="66066">
    <molecule id="Q68DA7-2"/>
</dbReference>
<dbReference type="ProteomicsDB" id="66067">
    <molecule id="Q68DA7-3"/>
</dbReference>
<dbReference type="ProteomicsDB" id="66068">
    <molecule id="Q68DA7-5"/>
</dbReference>
<dbReference type="Antibodypedia" id="51683">
    <property type="antibodies" value="100 antibodies from 19 providers"/>
</dbReference>
<dbReference type="DNASU" id="342184"/>
<dbReference type="Ensembl" id="ENST00000320930.7">
    <molecule id="Q68DA7-2"/>
    <property type="protein sequence ID" value="ENSP00000325166.7"/>
    <property type="gene ID" value="ENSG00000248905.10"/>
</dbReference>
<dbReference type="Ensembl" id="ENST00000334528.13">
    <molecule id="Q68DA7-5"/>
    <property type="protein sequence ID" value="ENSP00000333950.9"/>
    <property type="gene ID" value="ENSG00000248905.10"/>
</dbReference>
<dbReference type="Ensembl" id="ENST00000558197.1">
    <molecule id="Q68DA7-3"/>
    <property type="protein sequence ID" value="ENSP00000452984.1"/>
    <property type="gene ID" value="ENSG00000248905.10"/>
</dbReference>
<dbReference type="Ensembl" id="ENST00000616417.5">
    <molecule id="Q68DA7-1"/>
    <property type="protein sequence ID" value="ENSP00000479134.1"/>
    <property type="gene ID" value="ENSG00000248905.10"/>
</dbReference>
<dbReference type="GeneID" id="342184"/>
<dbReference type="KEGG" id="hsa:342184"/>
<dbReference type="MANE-Select" id="ENST00000616417.5">
    <property type="protein sequence ID" value="ENSP00000479134.1"/>
    <property type="RefSeq nucleotide sequence ID" value="NM_001277313.2"/>
    <property type="RefSeq protein sequence ID" value="NP_001264242.1"/>
</dbReference>
<dbReference type="UCSC" id="uc001zhf.6">
    <molecule id="Q68DA7-1"/>
    <property type="organism name" value="human"/>
</dbReference>
<dbReference type="AGR" id="HGNC:3768"/>
<dbReference type="CTD" id="342184"/>
<dbReference type="DisGeNET" id="342184"/>
<dbReference type="GeneCards" id="FMN1"/>
<dbReference type="HGNC" id="HGNC:3768">
    <property type="gene designation" value="FMN1"/>
</dbReference>
<dbReference type="HPA" id="ENSG00000248905">
    <property type="expression patterns" value="Tissue enhanced (retina)"/>
</dbReference>
<dbReference type="MalaCards" id="FMN1"/>
<dbReference type="MIM" id="136535">
    <property type="type" value="gene"/>
</dbReference>
<dbReference type="neXtProt" id="NX_Q68DA7"/>
<dbReference type="OpenTargets" id="ENSG00000248905"/>
<dbReference type="VEuPathDB" id="HostDB:ENSG00000248905"/>
<dbReference type="eggNOG" id="KOG1654">
    <property type="taxonomic scope" value="Eukaryota"/>
</dbReference>
<dbReference type="eggNOG" id="KOG1922">
    <property type="taxonomic scope" value="Eukaryota"/>
</dbReference>
<dbReference type="GeneTree" id="ENSGT00940000154289"/>
<dbReference type="HOGENOM" id="CLU_271027_0_0_1"/>
<dbReference type="InParanoid" id="Q68DA7"/>
<dbReference type="OMA" id="STEHTCR"/>
<dbReference type="OrthoDB" id="427644at2759"/>
<dbReference type="PAN-GO" id="Q68DA7">
    <property type="GO annotations" value="4 GO annotations based on evolutionary models"/>
</dbReference>
<dbReference type="PhylomeDB" id="Q68DA7"/>
<dbReference type="TreeFam" id="TF326072"/>
<dbReference type="PathwayCommons" id="Q68DA7"/>
<dbReference type="SignaLink" id="Q68DA7"/>
<dbReference type="BioGRID-ORCS" id="342184">
    <property type="hits" value="12 hits in 1150 CRISPR screens"/>
</dbReference>
<dbReference type="ChiTaRS" id="FMN1">
    <property type="organism name" value="human"/>
</dbReference>
<dbReference type="GenomeRNAi" id="342184"/>
<dbReference type="Pharos" id="Q68DA7">
    <property type="development level" value="Tbio"/>
</dbReference>
<dbReference type="PRO" id="PR:Q68DA7"/>
<dbReference type="Proteomes" id="UP000005640">
    <property type="component" value="Chromosome 15"/>
</dbReference>
<dbReference type="RNAct" id="Q68DA7">
    <property type="molecule type" value="protein"/>
</dbReference>
<dbReference type="Bgee" id="ENSG00000248905">
    <property type="expression patterns" value="Expressed in male germ line stem cell (sensu Vertebrata) in testis and 112 other cell types or tissues"/>
</dbReference>
<dbReference type="ExpressionAtlas" id="Q68DA7">
    <property type="expression patterns" value="baseline and differential"/>
</dbReference>
<dbReference type="GO" id="GO:0005884">
    <property type="term" value="C:actin filament"/>
    <property type="evidence" value="ECO:0007669"/>
    <property type="project" value="InterPro"/>
</dbReference>
<dbReference type="GO" id="GO:0005912">
    <property type="term" value="C:adherens junction"/>
    <property type="evidence" value="ECO:0007669"/>
    <property type="project" value="UniProtKB-SubCell"/>
</dbReference>
<dbReference type="GO" id="GO:0005789">
    <property type="term" value="C:endoplasmic reticulum membrane"/>
    <property type="evidence" value="ECO:0000318"/>
    <property type="project" value="GO_Central"/>
</dbReference>
<dbReference type="GO" id="GO:0005634">
    <property type="term" value="C:nucleus"/>
    <property type="evidence" value="ECO:0000318"/>
    <property type="project" value="GO_Central"/>
</dbReference>
<dbReference type="GO" id="GO:0005886">
    <property type="term" value="C:plasma membrane"/>
    <property type="evidence" value="ECO:0007669"/>
    <property type="project" value="UniProtKB-SubCell"/>
</dbReference>
<dbReference type="GO" id="GO:0003779">
    <property type="term" value="F:actin binding"/>
    <property type="evidence" value="ECO:0007669"/>
    <property type="project" value="UniProtKB-KW"/>
</dbReference>
<dbReference type="GO" id="GO:0008017">
    <property type="term" value="F:microtubule binding"/>
    <property type="evidence" value="ECO:0007669"/>
    <property type="project" value="InterPro"/>
</dbReference>
<dbReference type="GO" id="GO:0030036">
    <property type="term" value="P:actin cytoskeleton organization"/>
    <property type="evidence" value="ECO:0000318"/>
    <property type="project" value="GO_Central"/>
</dbReference>
<dbReference type="GO" id="GO:0045010">
    <property type="term" value="P:actin nucleation"/>
    <property type="evidence" value="ECO:0007669"/>
    <property type="project" value="InterPro"/>
</dbReference>
<dbReference type="FunFam" id="1.20.58.2220:FF:000005">
    <property type="entry name" value="Formin 1"/>
    <property type="match status" value="1"/>
</dbReference>
<dbReference type="Gene3D" id="1.20.58.2220">
    <property type="entry name" value="Formin, FH2 domain"/>
    <property type="match status" value="1"/>
</dbReference>
<dbReference type="InterPro" id="IPR015425">
    <property type="entry name" value="FH2_Formin"/>
</dbReference>
<dbReference type="InterPro" id="IPR042201">
    <property type="entry name" value="FH2_Formin_sf"/>
</dbReference>
<dbReference type="InterPro" id="IPR001265">
    <property type="entry name" value="Formin_Cappuccino_subfam"/>
</dbReference>
<dbReference type="PANTHER" id="PTHR45920">
    <property type="entry name" value="FORMIN HOMOLOGY 2 DOMAIN CONTAINING, ISOFORM I"/>
    <property type="match status" value="1"/>
</dbReference>
<dbReference type="PANTHER" id="PTHR45920:SF7">
    <property type="entry name" value="FORMIN-G"/>
    <property type="match status" value="1"/>
</dbReference>
<dbReference type="Pfam" id="PF02181">
    <property type="entry name" value="FH2"/>
    <property type="match status" value="1"/>
</dbReference>
<dbReference type="PRINTS" id="PR00828">
    <property type="entry name" value="FORMIN"/>
</dbReference>
<dbReference type="SMART" id="SM00498">
    <property type="entry name" value="FH2"/>
    <property type="match status" value="1"/>
</dbReference>
<dbReference type="SUPFAM" id="SSF101447">
    <property type="entry name" value="Formin homology 2 domain (FH2 domain)"/>
    <property type="match status" value="1"/>
</dbReference>
<dbReference type="PROSITE" id="PS51444">
    <property type="entry name" value="FH2"/>
    <property type="match status" value="1"/>
</dbReference>
<keyword id="KW-0009">Actin-binding</keyword>
<keyword id="KW-0025">Alternative splicing</keyword>
<keyword id="KW-0965">Cell junction</keyword>
<keyword id="KW-1003">Cell membrane</keyword>
<keyword id="KW-0175">Coiled coil</keyword>
<keyword id="KW-0963">Cytoplasm</keyword>
<keyword id="KW-0472">Membrane</keyword>
<keyword id="KW-0539">Nucleus</keyword>
<keyword id="KW-0597">Phosphoprotein</keyword>
<keyword id="KW-1267">Proteomics identification</keyword>
<keyword id="KW-1185">Reference proteome</keyword>
<sequence>MEGTHCTLQLHKPITELCYISFCLPKGEVRGFSYKGTVTLDRSNKGFHNCYQVREESDIISLSQEPDEHPGDIFFKQTPTKDILTELYKLTTERERLLTNLLSSDHILGITMGNQEGKLQELSVSLAPEDDCFQSAGDWQGELPVGPLNKRSTHGNKKPRRSSGRRESFGALPQKRTKRKGRGGRESAPLMGKDKICSSHSLPLSRTRPNLWVLEEKGNLLPNGALACSLQRRESCPPDIPKTPDTDLGFGSFETAFKDTGLGREVLPPDCSSTEAGGDGIRRPPSGLEHQQTGLSESHQDPEKHPEAEKDEMEKPAKRTCKQKPVSKVVAKVQDLSSQVQRVVKTHSKGKETIAIRPAAHAEFVPKADLLTLPGAEAGAHGSRRQGKERQGDRSSQSPAGETASISSVSASAEGAVNKVPLKVIESEKLDEAPEGKRLGFPVHTSVPHTRPETRNKRRAGLPLGGHKSLFLDLPHKVGPDSSQPRGDKKKPSPPAPAALGKVFNNSASQSSTHKQTSPVPSPLSPRLPSPQQHHRILRLPALPGEREAALNDSPCRKSRVFSGCVSADTLEPPSSAKVTETKGASPAFLRAGQPRLVPGETLEKSLGPGKTTAEPQHQSPPGISSEGFPWDGFNEQTPKDLPNRDGGAWVLGYRAGPACPFLLHEEREKSNRSELYLDLHPDHSLTEQDDRTPGRLQAVWPPPKTKDTEEKVGLKYTEAEYQAAILHLKREHKEEIENLQAQFELRAFHIRGEHAMITARLEETIENLKHELEHRWRGGCEERKDVCISTDDDCPPKTFRNVCVQTDRETFLKPCESESKTTRSNQLVPKKLNISSLSQLSPPNDHKDIHAALQPMEGMASNQQKALPPPPASIPPPPPLPSGLGSLSPAPPMPPVSAGPPLPPPPPPPPPLPPPSSAGPPPPPPPPPLPNSPAPPNPGGPPPAPPPPGLAPPPPPGLFFGLGSSSSQCPRKPAIEPSCPMKPLYWTRIQISDRSQNATPTLWDSLEEPDIRDPSEFEYLFSKDTTQQKKKPLSETYEKKNKVKKIIKLLDGKRSQTVGILISSLHLEMKDIQQAIFNVDDSVVDLETLAALYENRAQEDELVKIRKYYETSKEEELKLLDKPEQFLHELAQIPNFAERAQCIIFRSVFSEGITSLHRKVEIITRASKDLLHVKSVKDILALILAFGNYMNGGNRTRGQADGYSLEILPKLKDVKSRDNGINLVDYVVKYYLRYYDQEAGTEKSVFPLPEPQDFFLASQVKFEDLIKDLRKLKRQLEASEKQMVVVCKESPKEYLQPFKDKLEEFFQKAKKEHKMEESHLENAQKSFETTVRYFGMKPKSGEKEITPSYVFMVWYEFCSDFKTIWKRESKNISKERLKMAQESVSKLTSEKKVETKKINPTASLKERLRQKEASVTTN</sequence>
<protein>
    <recommendedName>
        <fullName>Formin-1</fullName>
    </recommendedName>
    <alternativeName>
        <fullName>Limb deformity protein homolog</fullName>
    </alternativeName>
</protein>
<organism>
    <name type="scientific">Homo sapiens</name>
    <name type="common">Human</name>
    <dbReference type="NCBI Taxonomy" id="9606"/>
    <lineage>
        <taxon>Eukaryota</taxon>
        <taxon>Metazoa</taxon>
        <taxon>Chordata</taxon>
        <taxon>Craniata</taxon>
        <taxon>Vertebrata</taxon>
        <taxon>Euteleostomi</taxon>
        <taxon>Mammalia</taxon>
        <taxon>Eutheria</taxon>
        <taxon>Euarchontoglires</taxon>
        <taxon>Primates</taxon>
        <taxon>Haplorrhini</taxon>
        <taxon>Catarrhini</taxon>
        <taxon>Hominidae</taxon>
        <taxon>Homo</taxon>
    </lineage>
</organism>